<dbReference type="EMBL" id="CP000158">
    <property type="protein sequence ID" value="ABI76304.1"/>
    <property type="molecule type" value="Genomic_DNA"/>
</dbReference>
<dbReference type="RefSeq" id="WP_011645327.1">
    <property type="nucleotide sequence ID" value="NC_008358.1"/>
</dbReference>
<dbReference type="SMR" id="Q0C5G6"/>
<dbReference type="STRING" id="228405.HNE_0297"/>
<dbReference type="KEGG" id="hne:HNE_0297"/>
<dbReference type="eggNOG" id="COG0249">
    <property type="taxonomic scope" value="Bacteria"/>
</dbReference>
<dbReference type="HOGENOM" id="CLU_002472_3_1_5"/>
<dbReference type="Proteomes" id="UP000001959">
    <property type="component" value="Chromosome"/>
</dbReference>
<dbReference type="GO" id="GO:0005829">
    <property type="term" value="C:cytosol"/>
    <property type="evidence" value="ECO:0007669"/>
    <property type="project" value="TreeGrafter"/>
</dbReference>
<dbReference type="GO" id="GO:0005524">
    <property type="term" value="F:ATP binding"/>
    <property type="evidence" value="ECO:0007669"/>
    <property type="project" value="UniProtKB-UniRule"/>
</dbReference>
<dbReference type="GO" id="GO:0140664">
    <property type="term" value="F:ATP-dependent DNA damage sensor activity"/>
    <property type="evidence" value="ECO:0007669"/>
    <property type="project" value="InterPro"/>
</dbReference>
<dbReference type="GO" id="GO:0003684">
    <property type="term" value="F:damaged DNA binding"/>
    <property type="evidence" value="ECO:0007669"/>
    <property type="project" value="UniProtKB-UniRule"/>
</dbReference>
<dbReference type="GO" id="GO:0030983">
    <property type="term" value="F:mismatched DNA binding"/>
    <property type="evidence" value="ECO:0007669"/>
    <property type="project" value="InterPro"/>
</dbReference>
<dbReference type="GO" id="GO:0006298">
    <property type="term" value="P:mismatch repair"/>
    <property type="evidence" value="ECO:0007669"/>
    <property type="project" value="UniProtKB-UniRule"/>
</dbReference>
<dbReference type="FunFam" id="3.40.1170.10:FF:000001">
    <property type="entry name" value="DNA mismatch repair protein MutS"/>
    <property type="match status" value="1"/>
</dbReference>
<dbReference type="Gene3D" id="1.10.1420.10">
    <property type="match status" value="2"/>
</dbReference>
<dbReference type="Gene3D" id="6.10.140.430">
    <property type="match status" value="1"/>
</dbReference>
<dbReference type="Gene3D" id="3.40.1170.10">
    <property type="entry name" value="DNA repair protein MutS, domain I"/>
    <property type="match status" value="1"/>
</dbReference>
<dbReference type="Gene3D" id="3.30.420.110">
    <property type="entry name" value="MutS, connector domain"/>
    <property type="match status" value="1"/>
</dbReference>
<dbReference type="Gene3D" id="3.40.50.300">
    <property type="entry name" value="P-loop containing nucleotide triphosphate hydrolases"/>
    <property type="match status" value="1"/>
</dbReference>
<dbReference type="HAMAP" id="MF_00096">
    <property type="entry name" value="MutS"/>
    <property type="match status" value="1"/>
</dbReference>
<dbReference type="InterPro" id="IPR005748">
    <property type="entry name" value="DNA_mismatch_repair_MutS"/>
</dbReference>
<dbReference type="InterPro" id="IPR007695">
    <property type="entry name" value="DNA_mismatch_repair_MutS-lik_N"/>
</dbReference>
<dbReference type="InterPro" id="IPR017261">
    <property type="entry name" value="DNA_mismatch_repair_MutS/MSH"/>
</dbReference>
<dbReference type="InterPro" id="IPR000432">
    <property type="entry name" value="DNA_mismatch_repair_MutS_C"/>
</dbReference>
<dbReference type="InterPro" id="IPR007861">
    <property type="entry name" value="DNA_mismatch_repair_MutS_clamp"/>
</dbReference>
<dbReference type="InterPro" id="IPR007696">
    <property type="entry name" value="DNA_mismatch_repair_MutS_core"/>
</dbReference>
<dbReference type="InterPro" id="IPR016151">
    <property type="entry name" value="DNA_mismatch_repair_MutS_N"/>
</dbReference>
<dbReference type="InterPro" id="IPR036187">
    <property type="entry name" value="DNA_mismatch_repair_MutS_sf"/>
</dbReference>
<dbReference type="InterPro" id="IPR007860">
    <property type="entry name" value="DNA_mmatch_repair_MutS_con_dom"/>
</dbReference>
<dbReference type="InterPro" id="IPR045076">
    <property type="entry name" value="MutS"/>
</dbReference>
<dbReference type="InterPro" id="IPR036678">
    <property type="entry name" value="MutS_con_dom_sf"/>
</dbReference>
<dbReference type="InterPro" id="IPR027417">
    <property type="entry name" value="P-loop_NTPase"/>
</dbReference>
<dbReference type="NCBIfam" id="TIGR01070">
    <property type="entry name" value="mutS1"/>
    <property type="match status" value="1"/>
</dbReference>
<dbReference type="NCBIfam" id="NF003810">
    <property type="entry name" value="PRK05399.1"/>
    <property type="match status" value="1"/>
</dbReference>
<dbReference type="PANTHER" id="PTHR11361:SF34">
    <property type="entry name" value="DNA MISMATCH REPAIR PROTEIN MSH1, MITOCHONDRIAL"/>
    <property type="match status" value="1"/>
</dbReference>
<dbReference type="PANTHER" id="PTHR11361">
    <property type="entry name" value="DNA MISMATCH REPAIR PROTEIN MUTS FAMILY MEMBER"/>
    <property type="match status" value="1"/>
</dbReference>
<dbReference type="Pfam" id="PF01624">
    <property type="entry name" value="MutS_I"/>
    <property type="match status" value="1"/>
</dbReference>
<dbReference type="Pfam" id="PF05188">
    <property type="entry name" value="MutS_II"/>
    <property type="match status" value="1"/>
</dbReference>
<dbReference type="Pfam" id="PF05192">
    <property type="entry name" value="MutS_III"/>
    <property type="match status" value="1"/>
</dbReference>
<dbReference type="Pfam" id="PF05190">
    <property type="entry name" value="MutS_IV"/>
    <property type="match status" value="1"/>
</dbReference>
<dbReference type="Pfam" id="PF00488">
    <property type="entry name" value="MutS_V"/>
    <property type="match status" value="1"/>
</dbReference>
<dbReference type="PIRSF" id="PIRSF037677">
    <property type="entry name" value="DNA_mis_repair_Msh6"/>
    <property type="match status" value="1"/>
</dbReference>
<dbReference type="SMART" id="SM00534">
    <property type="entry name" value="MUTSac"/>
    <property type="match status" value="1"/>
</dbReference>
<dbReference type="SMART" id="SM00533">
    <property type="entry name" value="MUTSd"/>
    <property type="match status" value="1"/>
</dbReference>
<dbReference type="SUPFAM" id="SSF55271">
    <property type="entry name" value="DNA repair protein MutS, domain I"/>
    <property type="match status" value="1"/>
</dbReference>
<dbReference type="SUPFAM" id="SSF53150">
    <property type="entry name" value="DNA repair protein MutS, domain II"/>
    <property type="match status" value="1"/>
</dbReference>
<dbReference type="SUPFAM" id="SSF48334">
    <property type="entry name" value="DNA repair protein MutS, domain III"/>
    <property type="match status" value="1"/>
</dbReference>
<dbReference type="SUPFAM" id="SSF52540">
    <property type="entry name" value="P-loop containing nucleoside triphosphate hydrolases"/>
    <property type="match status" value="1"/>
</dbReference>
<dbReference type="PROSITE" id="PS00486">
    <property type="entry name" value="DNA_MISMATCH_REPAIR_2"/>
    <property type="match status" value="1"/>
</dbReference>
<keyword id="KW-0067">ATP-binding</keyword>
<keyword id="KW-0227">DNA damage</keyword>
<keyword id="KW-0234">DNA repair</keyword>
<keyword id="KW-0238">DNA-binding</keyword>
<keyword id="KW-0547">Nucleotide-binding</keyword>
<keyword id="KW-1185">Reference proteome</keyword>
<proteinExistence type="inferred from homology"/>
<gene>
    <name evidence="1" type="primary">mutS</name>
    <name type="ordered locus">HNE_0297</name>
</gene>
<reference key="1">
    <citation type="journal article" date="2006" name="J. Bacteriol.">
        <title>Comparative genomic evidence for a close relationship between the dimorphic prosthecate bacteria Hyphomonas neptunium and Caulobacter crescentus.</title>
        <authorList>
            <person name="Badger J.H."/>
            <person name="Hoover T.R."/>
            <person name="Brun Y.V."/>
            <person name="Weiner R.M."/>
            <person name="Laub M.T."/>
            <person name="Alexandre G."/>
            <person name="Mrazek J."/>
            <person name="Ren Q."/>
            <person name="Paulsen I.T."/>
            <person name="Nelson K.E."/>
            <person name="Khouri H.M."/>
            <person name="Radune D."/>
            <person name="Sosa J."/>
            <person name="Dodson R.J."/>
            <person name="Sullivan S.A."/>
            <person name="Rosovitz M.J."/>
            <person name="Madupu R."/>
            <person name="Brinkac L.M."/>
            <person name="Durkin A.S."/>
            <person name="Daugherty S.C."/>
            <person name="Kothari S.P."/>
            <person name="Giglio M.G."/>
            <person name="Zhou L."/>
            <person name="Haft D.H."/>
            <person name="Selengut J.D."/>
            <person name="Davidsen T.M."/>
            <person name="Yang Q."/>
            <person name="Zafar N."/>
            <person name="Ward N.L."/>
        </authorList>
    </citation>
    <scope>NUCLEOTIDE SEQUENCE [LARGE SCALE GENOMIC DNA]</scope>
    <source>
        <strain>ATCC 15444</strain>
    </source>
</reference>
<organism>
    <name type="scientific">Hyphomonas neptunium (strain ATCC 15444)</name>
    <dbReference type="NCBI Taxonomy" id="228405"/>
    <lineage>
        <taxon>Bacteria</taxon>
        <taxon>Pseudomonadati</taxon>
        <taxon>Pseudomonadota</taxon>
        <taxon>Alphaproteobacteria</taxon>
        <taxon>Hyphomonadales</taxon>
        <taxon>Hyphomonadaceae</taxon>
        <taxon>Hyphomonas</taxon>
    </lineage>
</organism>
<feature type="chain" id="PRO_0000335168" description="DNA mismatch repair protein MutS">
    <location>
        <begin position="1"/>
        <end position="890"/>
    </location>
</feature>
<feature type="binding site" evidence="1">
    <location>
        <begin position="646"/>
        <end position="653"/>
    </location>
    <ligand>
        <name>ATP</name>
        <dbReference type="ChEBI" id="CHEBI:30616"/>
    </ligand>
</feature>
<sequence length="890" mass="94096">MPDTARPSATTEPTPFMAQYLSIKAEHPGALLFFRMGDFYELFFQDAVEAASILDITLTSRGEHDGKPIPMAGVPYHAAEGYLARLIKGGCRVAVCEQMETPAEAKKRGSKSIVQRGVVRIVTPGTLTEDALLPARQGQALAAIAFSGAGEAALAVCDVSTGAFDLTAIPAARLGEALLAWPLSELVISADDADRPLILEARGFLSAPITERPGRAATAKSGEALLKEVFGLAALDSLGDFSRVEFAAAGLLLDYVKLTQAGAPIRLRAPRRPDTGGILLIDPATRASLEIDRSISGGRDGTLLAVIDRTVTAPGARLLAARLARPSRSVSEITSRYDAVSHLLGDAGQLEDVRVRLKSAPDLERAVMRLNLGRGGPRDMAALSKAVLSGAEAAGVLGRGLPPRLAEVAETLGLSGAPSVRAFAEDLARALTEAPPMLARDGGFIAQGWDVALDEVRALRDGSRRVIAELQAKYADQTGINALKVKFNNVLGYFIEVPAAKADPMLRAPLSADFIHRQTMAGAVRFSTHELADLAGRIGRAEDEAKAREIAIFEAFCAKVEELTGPLAVIAAALAELDVAASHAVWAAETGAVRPALDPRPVFEAKGLRHPVVEAALRKEGKGFTANDLHLDAEGNEGARFLLVTGPNMAGKSTYLRQSALAVILAQAGAFVPAASLRLGLSDRVFSRVGASDDLARGRSTFMVEMVETAAILNQATPESFVILDEVGRGTATWDGLAIAWAAAEHLHDTNRCRAIFATHYHELTDLAARMPAASNASLKAREWKQDLIFLHEVQPGPADRSYGVQVAKLAGLPRAAVARAGQILKKLEAGPSASENLPLFAMVAEDPAPEFSPESSAVIEALAAADPDSLTPREALDLVYRLKDLSRGA</sequence>
<name>MUTS_HYPNA</name>
<evidence type="ECO:0000255" key="1">
    <source>
        <dbReference type="HAMAP-Rule" id="MF_00096"/>
    </source>
</evidence>
<comment type="function">
    <text evidence="1">This protein is involved in the repair of mismatches in DNA. It is possible that it carries out the mismatch recognition step. This protein has a weak ATPase activity.</text>
</comment>
<comment type="similarity">
    <text evidence="1">Belongs to the DNA mismatch repair MutS family.</text>
</comment>
<accession>Q0C5G6</accession>
<protein>
    <recommendedName>
        <fullName evidence="1">DNA mismatch repair protein MutS</fullName>
    </recommendedName>
</protein>